<organism>
    <name type="scientific">Pan troglodytes</name>
    <name type="common">Chimpanzee</name>
    <dbReference type="NCBI Taxonomy" id="9598"/>
    <lineage>
        <taxon>Eukaryota</taxon>
        <taxon>Metazoa</taxon>
        <taxon>Chordata</taxon>
        <taxon>Craniata</taxon>
        <taxon>Vertebrata</taxon>
        <taxon>Euteleostomi</taxon>
        <taxon>Mammalia</taxon>
        <taxon>Eutheria</taxon>
        <taxon>Euarchontoglires</taxon>
        <taxon>Primates</taxon>
        <taxon>Haplorrhini</taxon>
        <taxon>Catarrhini</taxon>
        <taxon>Hominidae</taxon>
        <taxon>Pan</taxon>
    </lineage>
</organism>
<comment type="function">
    <text evidence="1 2">Adhesion G-protein coupled receptor (aGPCR) for steroid hormone 17alpha-hydroxypregnenolone (17-OH), which is involved in cell adhesion and cell-cell interactions. Ligand binding causes a conformation change that triggers signaling via guanine nucleotide-binding proteins (G proteins) and modulates the activity of downstream effectors, such as RhoA pathway. ADGRG1 is coupled to G(12) and/or G(13) G proteins (GNA12 and GNA13, respectively) and mediates the activation Rho small GTPases (By similarity). Acts as a potent suppressor of ferroptosis: binding to 17-OH-binding initiates signaling that down-regulates CD36 and alleviates ferroptosis-induced liver injury. Ligand-binding also induces cell adhesion activity via association with proteins such as collagen III/COL3A1 and TGM2. Mediates cell matrix adhesion in developing neurons and hematopoietic stem cells (By similarity). Involved in cortical development, specifically in maintenance of the pial basement membrane integrity and in cortical lamination: association with COL3A1 in the developing brain inhibits neuronal migration via activation of the RhoA pathway (By similarity). Together with TGM2, acts as a regulator of myelination and myelin repair in oligodendrocyte precursor cells (By similarity). Acts as a hemostatic sensor of shear force: G protein-coupled receptor signaling is activated in response to shear force in platelets, promoting G(13) G protein signaling, and platelet shape change and aggregation in a COL3A1-dependent manner. Acts as an inhibitor of VEGFA production thereby inhibiting angiogenesis through a signaling pathway mediated by PRKCA (By similarity). Plays a role in the maintenance of hematopoietic stem cells in bone marrow niche. Plays an essential role in testis development (By similarity).</text>
</comment>
<comment type="activity regulation">
    <text evidence="2">Forms a heterodimer of 2 chains generated by proteolytic processing that remain associated through non-covalent interactions mediated by the GAIN-B domain. In the inactivated receptor, the Stachel sequence (also named stalk) is embedded in the GAIN-B domain, where it adopts a beta-strand conformation. On activation, the Stachel moves into the 7 transmembrane region and adopts a twisted hook-shaped configuration that forms contacts within the receptor, leading to coupling of a G-alpha protein, which activates signaling. The cleaved GAIN-B and N-terminal domains can then dissociate from the rest of the receptor.</text>
</comment>
<comment type="subunit">
    <text evidence="2">Heterodimer of 2 chains generated by proteolytic processing; the large extracellular N-terminal fragment (ADGRG1 NT) and the membrane-bound C-terminal fragment (ADGRG1-CT) predominantly remain associated and non-covalently linked. ADGRG1 NT self-associates in a trans-trans manner; the homophilic interaction enhances receptor signaling. Interacts with TGM2. Interacts with heparin; leading to the reduction of ADGRG1 shedding. Interacts with COL3A1. Part of a GPCR-tetraspanin complex at least consisting of ADGRG1, CD81, eventually CD9, and GNA11 in which CD81 is enhancing the association of ADGRG1 with GNA11.</text>
</comment>
<comment type="subcellular location">
    <subcellularLocation>
        <location evidence="2">Cell membrane</location>
        <topology evidence="2">Multi-pass membrane protein</topology>
    </subcellularLocation>
</comment>
<comment type="subcellular location">
    <molecule>Adhesion G-protein coupled receptor G1, N-terminal fragment</molecule>
    <subcellularLocation>
        <location evidence="2">Secreted</location>
    </subcellularLocation>
    <text evidence="2">Activation of the G protein-coupled receptor and interaction with COL3A1 leads to the release of ADGRG1 NT from the membrane.</text>
</comment>
<comment type="subcellular location">
    <molecule>Adhesion G-protein coupled receptor G1, C-terminal fragment</molecule>
    <subcellularLocation>
        <location evidence="2">Membrane raft</location>
    </subcellularLocation>
    <text evidence="2">Interaction with its ligand COL3A1 leads to the release of ADGRG1 NT from the membrane and triggers the association of ADGRG1 CT with lipid rafts.</text>
</comment>
<comment type="domain">
    <text evidence="2">The Stachel sequence (also named stalk) in the C-terminal part of the extracellular domain (ECD) functions as a tethered agonist. In the inactivated receptor, the Stachel sequence (also named stalk) is embedded in the GAIN-B domain, where it adopts a beta-strand conformation. On activation, the Stachel moves into the 7 transmembrane region and adopts a twisted hook-shaped configuration that forms contacts within the receptor, leading to coupling of a G-alpha protein, which activates signaling.</text>
</comment>
<comment type="PTM">
    <text evidence="2">Autoproteolytically cleaved into 2 fragments; the large extracellular N-terminal fragment (ADGRG1 NT) and the membrane-bound C-terminal fragment (ADGRG1 CT) predominantly remain associated and non-covalently linked. Shedding to yield the secreted ADGRG1 N-terminal fragment seems to involve metalloprotease(s).</text>
</comment>
<comment type="PTM">
    <text evidence="2">Ubiquitinated. Undergoes polyubiquitination upon activation.</text>
</comment>
<comment type="similarity">
    <text evidence="6">Belongs to the G-protein coupled receptor 2 family. LN-TM7 subfamily.</text>
</comment>
<reference key="1">
    <citation type="submission" date="2004-12" db="EMBL/GenBank/DDBJ databases">
        <title>Detecting selection requires more than just human-chimpanzee-mouse trios.</title>
        <authorList>
            <person name="Piao X."/>
            <person name="Collura R.V."/>
            <person name="Lobell A."/>
            <person name="Bailey A.S."/>
            <person name="Walsh C.A."/>
            <person name="Ruvolo M."/>
        </authorList>
    </citation>
    <scope>NUCLEOTIDE SEQUENCE [GENOMIC DNA]</scope>
</reference>
<dbReference type="EMBL" id="AY845365">
    <property type="protein sequence ID" value="AAX56344.1"/>
    <property type="molecule type" value="Genomic_DNA"/>
</dbReference>
<dbReference type="EMBL" id="AY845353">
    <property type="protein sequence ID" value="AAX56344.1"/>
    <property type="status" value="JOINED"/>
    <property type="molecule type" value="Genomic_DNA"/>
</dbReference>
<dbReference type="EMBL" id="AY845354">
    <property type="protein sequence ID" value="AAX56344.1"/>
    <property type="status" value="JOINED"/>
    <property type="molecule type" value="Genomic_DNA"/>
</dbReference>
<dbReference type="EMBL" id="AY845355">
    <property type="protein sequence ID" value="AAX56344.1"/>
    <property type="status" value="JOINED"/>
    <property type="molecule type" value="Genomic_DNA"/>
</dbReference>
<dbReference type="EMBL" id="AY845356">
    <property type="protein sequence ID" value="AAX56344.1"/>
    <property type="status" value="JOINED"/>
    <property type="molecule type" value="Genomic_DNA"/>
</dbReference>
<dbReference type="EMBL" id="AY845357">
    <property type="protein sequence ID" value="AAX56344.1"/>
    <property type="status" value="JOINED"/>
    <property type="molecule type" value="Genomic_DNA"/>
</dbReference>
<dbReference type="EMBL" id="AY845358">
    <property type="protein sequence ID" value="AAX56344.1"/>
    <property type="status" value="JOINED"/>
    <property type="molecule type" value="Genomic_DNA"/>
</dbReference>
<dbReference type="EMBL" id="AY845359">
    <property type="protein sequence ID" value="AAX56344.1"/>
    <property type="status" value="JOINED"/>
    <property type="molecule type" value="Genomic_DNA"/>
</dbReference>
<dbReference type="EMBL" id="AY845360">
    <property type="protein sequence ID" value="AAX56344.1"/>
    <property type="status" value="JOINED"/>
    <property type="molecule type" value="Genomic_DNA"/>
</dbReference>
<dbReference type="EMBL" id="AY845361">
    <property type="protein sequence ID" value="AAX56344.1"/>
    <property type="status" value="JOINED"/>
    <property type="molecule type" value="Genomic_DNA"/>
</dbReference>
<dbReference type="EMBL" id="AY845362">
    <property type="protein sequence ID" value="AAX56344.1"/>
    <property type="status" value="JOINED"/>
    <property type="molecule type" value="Genomic_DNA"/>
</dbReference>
<dbReference type="EMBL" id="AY845363">
    <property type="protein sequence ID" value="AAX56344.1"/>
    <property type="status" value="JOINED"/>
    <property type="molecule type" value="Genomic_DNA"/>
</dbReference>
<dbReference type="EMBL" id="AY845364">
    <property type="protein sequence ID" value="AAX56344.1"/>
    <property type="status" value="JOINED"/>
    <property type="molecule type" value="Genomic_DNA"/>
</dbReference>
<dbReference type="RefSeq" id="XP_016784064.1">
    <property type="nucleotide sequence ID" value="XM_016928575.3"/>
</dbReference>
<dbReference type="RefSeq" id="XP_016784065.1">
    <property type="nucleotide sequence ID" value="XM_016928576.4"/>
</dbReference>
<dbReference type="RefSeq" id="XP_016784067.1">
    <property type="nucleotide sequence ID" value="XM_016928578.3"/>
</dbReference>
<dbReference type="RefSeq" id="XP_016784068.1">
    <property type="nucleotide sequence ID" value="XM_016928579.3"/>
</dbReference>
<dbReference type="RefSeq" id="XP_016784069.1">
    <property type="nucleotide sequence ID" value="XM_016928580.3"/>
</dbReference>
<dbReference type="RefSeq" id="XP_016784070.1">
    <property type="nucleotide sequence ID" value="XM_016928581.3"/>
</dbReference>
<dbReference type="RefSeq" id="XP_054524022.1">
    <property type="nucleotide sequence ID" value="XM_054668047.1"/>
</dbReference>
<dbReference type="RefSeq" id="XP_054524023.1">
    <property type="nucleotide sequence ID" value="XM_054668048.1"/>
</dbReference>
<dbReference type="RefSeq" id="XP_054524024.1">
    <property type="nucleotide sequence ID" value="XM_054668049.1"/>
</dbReference>
<dbReference type="RefSeq" id="XP_054524025.1">
    <property type="nucleotide sequence ID" value="XM_054668050.2"/>
</dbReference>
<dbReference type="RefSeq" id="XP_063652354.1">
    <property type="nucleotide sequence ID" value="XM_063796284.1"/>
</dbReference>
<dbReference type="RefSeq" id="XP_063652355.1">
    <property type="nucleotide sequence ID" value="XM_063796285.1"/>
</dbReference>
<dbReference type="SMR" id="Q50DM7"/>
<dbReference type="STRING" id="9598.ENSPTRP00000054569"/>
<dbReference type="MEROPS" id="P02.008"/>
<dbReference type="GlyCosmos" id="Q50DM7">
    <property type="glycosylation" value="7 sites, No reported glycans"/>
</dbReference>
<dbReference type="PaxDb" id="9598-ENSPTRP00000054569"/>
<dbReference type="GeneID" id="737751"/>
<dbReference type="KEGG" id="ptr:737751"/>
<dbReference type="CTD" id="9289"/>
<dbReference type="eggNOG" id="KOG4193">
    <property type="taxonomic scope" value="Eukaryota"/>
</dbReference>
<dbReference type="InParanoid" id="Q50DM7"/>
<dbReference type="Proteomes" id="UP000002277">
    <property type="component" value="Unplaced"/>
</dbReference>
<dbReference type="GO" id="GO:0005576">
    <property type="term" value="C:extracellular region"/>
    <property type="evidence" value="ECO:0007669"/>
    <property type="project" value="UniProtKB-SubCell"/>
</dbReference>
<dbReference type="GO" id="GO:0097451">
    <property type="term" value="C:glial limiting end-foot"/>
    <property type="evidence" value="ECO:0000250"/>
    <property type="project" value="UniProtKB"/>
</dbReference>
<dbReference type="GO" id="GO:0045121">
    <property type="term" value="C:membrane raft"/>
    <property type="evidence" value="ECO:0007669"/>
    <property type="project" value="UniProtKB-SubCell"/>
</dbReference>
<dbReference type="GO" id="GO:0005886">
    <property type="term" value="C:plasma membrane"/>
    <property type="evidence" value="ECO:0000318"/>
    <property type="project" value="GO_Central"/>
</dbReference>
<dbReference type="GO" id="GO:0005518">
    <property type="term" value="F:collagen binding"/>
    <property type="evidence" value="ECO:0000250"/>
    <property type="project" value="UniProtKB"/>
</dbReference>
<dbReference type="GO" id="GO:0050840">
    <property type="term" value="F:extracellular matrix binding"/>
    <property type="evidence" value="ECO:0000250"/>
    <property type="project" value="UniProtKB"/>
</dbReference>
<dbReference type="GO" id="GO:0004930">
    <property type="term" value="F:G protein-coupled receptor activity"/>
    <property type="evidence" value="ECO:0000250"/>
    <property type="project" value="UniProtKB"/>
</dbReference>
<dbReference type="GO" id="GO:0008201">
    <property type="term" value="F:heparin binding"/>
    <property type="evidence" value="ECO:0000250"/>
    <property type="project" value="UniProtKB"/>
</dbReference>
<dbReference type="GO" id="GO:0007189">
    <property type="term" value="P:adenylate cyclase-activating G protein-coupled receptor signaling pathway"/>
    <property type="evidence" value="ECO:0000318"/>
    <property type="project" value="GO_Central"/>
</dbReference>
<dbReference type="GO" id="GO:0001525">
    <property type="term" value="P:angiogenesis"/>
    <property type="evidence" value="ECO:0000250"/>
    <property type="project" value="UniProtKB"/>
</dbReference>
<dbReference type="GO" id="GO:0007155">
    <property type="term" value="P:cell adhesion"/>
    <property type="evidence" value="ECO:0000250"/>
    <property type="project" value="UniProtKB"/>
</dbReference>
<dbReference type="GO" id="GO:0016477">
    <property type="term" value="P:cell migration"/>
    <property type="evidence" value="ECO:0000250"/>
    <property type="project" value="UniProtKB"/>
</dbReference>
<dbReference type="GO" id="GO:0007166">
    <property type="term" value="P:cell surface receptor signaling pathway"/>
    <property type="evidence" value="ECO:0007669"/>
    <property type="project" value="InterPro"/>
</dbReference>
<dbReference type="GO" id="GO:0021801">
    <property type="term" value="P:cerebral cortex radial glia-guided migration"/>
    <property type="evidence" value="ECO:0000250"/>
    <property type="project" value="UniProtKB"/>
</dbReference>
<dbReference type="GO" id="GO:0021819">
    <property type="term" value="P:layer formation in cerebral cortex"/>
    <property type="evidence" value="ECO:0000250"/>
    <property type="project" value="UniProtKB"/>
</dbReference>
<dbReference type="GO" id="GO:0008285">
    <property type="term" value="P:negative regulation of cell population proliferation"/>
    <property type="evidence" value="ECO:0000250"/>
    <property type="project" value="UniProtKB"/>
</dbReference>
<dbReference type="GO" id="GO:0110076">
    <property type="term" value="P:negative regulation of ferroptosis"/>
    <property type="evidence" value="ECO:0000250"/>
    <property type="project" value="UniProtKB"/>
</dbReference>
<dbReference type="GO" id="GO:2001223">
    <property type="term" value="P:negative regulation of neuron migration"/>
    <property type="evidence" value="ECO:0000250"/>
    <property type="project" value="UniProtKB"/>
</dbReference>
<dbReference type="GO" id="GO:0070444">
    <property type="term" value="P:oligodendrocyte progenitor proliferation"/>
    <property type="evidence" value="ECO:0000250"/>
    <property type="project" value="UniProtKB"/>
</dbReference>
<dbReference type="GO" id="GO:0007200">
    <property type="term" value="P:phospholipase C-activating G protein-coupled receptor signaling pathway"/>
    <property type="evidence" value="ECO:0000250"/>
    <property type="project" value="UniProtKB"/>
</dbReference>
<dbReference type="GO" id="GO:0045785">
    <property type="term" value="P:positive regulation of cell adhesion"/>
    <property type="evidence" value="ECO:0000250"/>
    <property type="project" value="UniProtKB"/>
</dbReference>
<dbReference type="GO" id="GO:0035025">
    <property type="term" value="P:positive regulation of Rho protein signal transduction"/>
    <property type="evidence" value="ECO:0000250"/>
    <property type="project" value="UniProtKB"/>
</dbReference>
<dbReference type="GO" id="GO:1900748">
    <property type="term" value="P:positive regulation of vascular endothelial growth factor signaling pathway"/>
    <property type="evidence" value="ECO:0000250"/>
    <property type="project" value="UniProtKB"/>
</dbReference>
<dbReference type="GO" id="GO:1905806">
    <property type="term" value="P:regulation of synapse pruning"/>
    <property type="evidence" value="ECO:0000250"/>
    <property type="project" value="UniProtKB"/>
</dbReference>
<dbReference type="GO" id="GO:0007266">
    <property type="term" value="P:Rho protein signal transduction"/>
    <property type="evidence" value="ECO:0000250"/>
    <property type="project" value="UniProtKB"/>
</dbReference>
<dbReference type="GO" id="GO:0160221">
    <property type="term" value="P:Rho-activating G protein-coupled receptor signaling pathway"/>
    <property type="evidence" value="ECO:0000250"/>
    <property type="project" value="UniProtKB"/>
</dbReference>
<dbReference type="CDD" id="cd15995">
    <property type="entry name" value="7tmB2_GPR56"/>
    <property type="match status" value="1"/>
</dbReference>
<dbReference type="FunFam" id="2.60.220.50:FF:000014">
    <property type="entry name" value="Adhesion G-protein coupled receptor G1"/>
    <property type="match status" value="1"/>
</dbReference>
<dbReference type="FunFam" id="1.20.1070.10:FF:000117">
    <property type="entry name" value="adhesion G-protein coupled receptor G1"/>
    <property type="match status" value="1"/>
</dbReference>
<dbReference type="Gene3D" id="2.60.220.50">
    <property type="match status" value="1"/>
</dbReference>
<dbReference type="Gene3D" id="1.20.1070.10">
    <property type="entry name" value="Rhodopsin 7-helix transmembrane proteins"/>
    <property type="match status" value="1"/>
</dbReference>
<dbReference type="InterPro" id="IPR040950">
    <property type="entry name" value="ADGRG1_GAIN_A"/>
</dbReference>
<dbReference type="InterPro" id="IPR057244">
    <property type="entry name" value="GAIN_B"/>
</dbReference>
<dbReference type="InterPro" id="IPR046338">
    <property type="entry name" value="GAIN_dom_sf"/>
</dbReference>
<dbReference type="InterPro" id="IPR017981">
    <property type="entry name" value="GPCR_2-like_7TM"/>
</dbReference>
<dbReference type="InterPro" id="IPR000832">
    <property type="entry name" value="GPCR_2_secretin-like"/>
</dbReference>
<dbReference type="InterPro" id="IPR003910">
    <property type="entry name" value="GPR1/GPR3/GPR5"/>
</dbReference>
<dbReference type="InterPro" id="IPR000203">
    <property type="entry name" value="GPS"/>
</dbReference>
<dbReference type="InterPro" id="IPR040679">
    <property type="entry name" value="PLL"/>
</dbReference>
<dbReference type="PANTHER" id="PTHR12011">
    <property type="entry name" value="ADHESION G-PROTEIN COUPLED RECEPTOR"/>
    <property type="match status" value="1"/>
</dbReference>
<dbReference type="PANTHER" id="PTHR12011:SF318">
    <property type="entry name" value="ADHESION G-PROTEIN COUPLED RECEPTOR G1"/>
    <property type="match status" value="1"/>
</dbReference>
<dbReference type="Pfam" id="PF00002">
    <property type="entry name" value="7tm_2"/>
    <property type="match status" value="1"/>
</dbReference>
<dbReference type="Pfam" id="PF18619">
    <property type="entry name" value="GAIN_A"/>
    <property type="match status" value="1"/>
</dbReference>
<dbReference type="Pfam" id="PF01825">
    <property type="entry name" value="GPS"/>
    <property type="match status" value="1"/>
</dbReference>
<dbReference type="Pfam" id="PF18587">
    <property type="entry name" value="PLL"/>
    <property type="match status" value="1"/>
</dbReference>
<dbReference type="PRINTS" id="PR00249">
    <property type="entry name" value="GPCRSECRETIN"/>
</dbReference>
<dbReference type="PRINTS" id="PR01422">
    <property type="entry name" value="GPR56ORPHANR"/>
</dbReference>
<dbReference type="SMART" id="SM00303">
    <property type="entry name" value="GPS"/>
    <property type="match status" value="1"/>
</dbReference>
<dbReference type="SUPFAM" id="SSF81321">
    <property type="entry name" value="Family A G protein-coupled receptor-like"/>
    <property type="match status" value="1"/>
</dbReference>
<dbReference type="PROSITE" id="PS50261">
    <property type="entry name" value="G_PROTEIN_RECEP_F2_4"/>
    <property type="match status" value="1"/>
</dbReference>
<dbReference type="PROSITE" id="PS50221">
    <property type="entry name" value="GAIN_B"/>
    <property type="match status" value="1"/>
</dbReference>
<evidence type="ECO:0000250" key="1">
    <source>
        <dbReference type="UniProtKB" id="Q8K209"/>
    </source>
</evidence>
<evidence type="ECO:0000250" key="2">
    <source>
        <dbReference type="UniProtKB" id="Q9Y653"/>
    </source>
</evidence>
<evidence type="ECO:0000255" key="3"/>
<evidence type="ECO:0000255" key="4">
    <source>
        <dbReference type="PROSITE-ProRule" id="PRU00098"/>
    </source>
</evidence>
<evidence type="ECO:0000256" key="5">
    <source>
        <dbReference type="SAM" id="MobiDB-lite"/>
    </source>
</evidence>
<evidence type="ECO:0000305" key="6"/>
<feature type="signal peptide" evidence="2">
    <location>
        <begin position="1"/>
        <end position="25"/>
    </location>
</feature>
<feature type="chain" id="PRO_0000012883" description="Adhesion G-protein coupled receptor G1">
    <location>
        <begin position="26"/>
        <end position="687"/>
    </location>
</feature>
<feature type="chain" id="PRO_0000423092" description="Adhesion G-protein coupled receptor G1, N-terminal fragment" evidence="2">
    <location>
        <begin position="26"/>
        <end position="382" status="uncertain"/>
    </location>
</feature>
<feature type="chain" id="PRO_0000423093" description="Adhesion G-protein coupled receptor G1, C-terminal fragment" evidence="2">
    <location>
        <begin position="383" status="uncertain"/>
        <end position="687"/>
    </location>
</feature>
<feature type="topological domain" description="Extracellular" evidence="3">
    <location>
        <begin position="26"/>
        <end position="402"/>
    </location>
</feature>
<feature type="transmembrane region" description="Helical; Name=1" evidence="3">
    <location>
        <begin position="403"/>
        <end position="423"/>
    </location>
</feature>
<feature type="topological domain" description="Cytoplasmic" evidence="3">
    <location>
        <begin position="424"/>
        <end position="442"/>
    </location>
</feature>
<feature type="transmembrane region" description="Helical; Name=2" evidence="3">
    <location>
        <begin position="443"/>
        <end position="463"/>
    </location>
</feature>
<feature type="topological domain" description="Extracellular" evidence="3">
    <location>
        <begin position="464"/>
        <end position="470"/>
    </location>
</feature>
<feature type="transmembrane region" description="Helical; Name=3" evidence="3">
    <location>
        <begin position="471"/>
        <end position="491"/>
    </location>
</feature>
<feature type="topological domain" description="Cytoplasmic" evidence="3">
    <location>
        <begin position="492"/>
        <end position="512"/>
    </location>
</feature>
<feature type="transmembrane region" description="Helical; Name=4" evidence="3">
    <location>
        <begin position="513"/>
        <end position="533"/>
    </location>
</feature>
<feature type="topological domain" description="Extracellular" evidence="3">
    <location>
        <begin position="534"/>
        <end position="570"/>
    </location>
</feature>
<feature type="transmembrane region" description="Helical; Name=5" evidence="3">
    <location>
        <begin position="571"/>
        <end position="591"/>
    </location>
</feature>
<feature type="topological domain" description="Cytoplasmic" evidence="3">
    <location>
        <begin position="592"/>
        <end position="603"/>
    </location>
</feature>
<feature type="transmembrane region" description="Helical; Name=6" evidence="3">
    <location>
        <begin position="604"/>
        <end position="624"/>
    </location>
</feature>
<feature type="topological domain" description="Extracellular" evidence="3">
    <location>
        <begin position="625"/>
        <end position="630"/>
    </location>
</feature>
<feature type="transmembrane region" description="Helical; Name=7" evidence="3">
    <location>
        <begin position="631"/>
        <end position="651"/>
    </location>
</feature>
<feature type="topological domain" description="Cytoplasmic" evidence="3">
    <location>
        <begin position="652"/>
        <end position="687"/>
    </location>
</feature>
<feature type="domain" description="GAIN-B" evidence="4">
    <location>
        <begin position="224"/>
        <end position="395"/>
    </location>
</feature>
<feature type="region of interest" description="GPS" evidence="4">
    <location>
        <begin position="346"/>
        <end position="395"/>
    </location>
</feature>
<feature type="region of interest" description="Stachel" evidence="2">
    <location>
        <begin position="384"/>
        <end position="397"/>
    </location>
</feature>
<feature type="region of interest" description="Disordered" evidence="5">
    <location>
        <begin position="664"/>
        <end position="687"/>
    </location>
</feature>
<feature type="compositionally biased region" description="Low complexity" evidence="5">
    <location>
        <begin position="678"/>
        <end position="687"/>
    </location>
</feature>
<feature type="binding site" evidence="2">
    <location>
        <begin position="26"/>
        <end position="33"/>
    </location>
    <ligand>
        <name>heparin</name>
        <dbReference type="ChEBI" id="CHEBI:28304"/>
    </ligand>
</feature>
<feature type="binding site" evidence="2">
    <location>
        <begin position="190"/>
        <end position="200"/>
    </location>
    <ligand>
        <name>heparin</name>
        <dbReference type="ChEBI" id="CHEBI:28304"/>
    </ligand>
</feature>
<feature type="site" description="Cleavage; by autolysis" evidence="4">
    <location>
        <begin position="382"/>
        <end position="383"/>
    </location>
</feature>
<feature type="glycosylation site" description="N-linked (GlcNAc...) asparagine" evidence="3">
    <location>
        <position position="39"/>
    </location>
</feature>
<feature type="glycosylation site" description="N-linked (GlcNAc...) asparagine" evidence="3">
    <location>
        <position position="148"/>
    </location>
</feature>
<feature type="glycosylation site" description="N-linked (GlcNAc...) asparagine" evidence="3">
    <location>
        <position position="171"/>
    </location>
</feature>
<feature type="glycosylation site" description="N-linked (GlcNAc...) asparagine" evidence="3">
    <location>
        <position position="234"/>
    </location>
</feature>
<feature type="glycosylation site" description="N-linked (GlcNAc...) asparagine" evidence="3">
    <location>
        <position position="303"/>
    </location>
</feature>
<feature type="glycosylation site" description="N-linked (GlcNAc...) asparagine" evidence="3">
    <location>
        <position position="324"/>
    </location>
</feature>
<feature type="glycosylation site" description="N-linked (GlcNAc...) asparagine" evidence="3">
    <location>
        <position position="341"/>
    </location>
</feature>
<feature type="disulfide bond" evidence="1">
    <location>
        <begin position="35"/>
        <end position="91"/>
    </location>
</feature>
<feature type="disulfide bond" evidence="1">
    <location>
        <begin position="121"/>
        <end position="177"/>
    </location>
</feature>
<feature type="disulfide bond" evidence="4">
    <location>
        <begin position="346"/>
        <end position="377"/>
    </location>
</feature>
<feature type="disulfide bond" evidence="4">
    <location>
        <begin position="366"/>
        <end position="379"/>
    </location>
</feature>
<accession>Q50DM7</accession>
<protein>
    <recommendedName>
        <fullName>Adhesion G-protein coupled receptor G1</fullName>
    </recommendedName>
    <alternativeName>
        <fullName>G-protein coupled receptor 56</fullName>
    </alternativeName>
    <component>
        <recommendedName>
            <fullName>Adhesion G-protein coupled receptor G1, N-terminal fragment</fullName>
        </recommendedName>
        <alternativeName>
            <fullName>ADGRG1 N-terminal fragment</fullName>
            <shortName>ADGRG1 NT</shortName>
        </alternativeName>
        <alternativeName>
            <fullName>GPR56 N-terminal fragment</fullName>
            <shortName>GPR56 NT</shortName>
            <shortName>GPR56(N)</shortName>
        </alternativeName>
        <alternativeName>
            <fullName>GPR56 extracellular subunit</fullName>
        </alternativeName>
        <alternativeName>
            <fullName>GPR56 subunit alpha</fullName>
        </alternativeName>
    </component>
    <component>
        <recommendedName>
            <fullName>Adhesion G-protein coupled receptor G1, C-terminal fragment</fullName>
        </recommendedName>
        <alternativeName>
            <fullName>ADGRG1 C-terminal fragment</fullName>
            <shortName>ADGRG1 CT</shortName>
        </alternativeName>
        <alternativeName>
            <fullName>GPR56 C-terminal fragment</fullName>
            <shortName>GPR56 CT</shortName>
            <shortName>GPR56(C)</shortName>
        </alternativeName>
        <alternativeName>
            <fullName>GPR56 seven-transmembrane subunit</fullName>
            <shortName>GPR56 7TM</shortName>
        </alternativeName>
        <alternativeName>
            <fullName>GPR56 subunit beta</fullName>
        </alternativeName>
    </component>
</protein>
<name>AGRG1_PANTR</name>
<proteinExistence type="inferred from homology"/>
<keyword id="KW-0130">Cell adhesion</keyword>
<keyword id="KW-1003">Cell membrane</keyword>
<keyword id="KW-0217">Developmental protein</keyword>
<keyword id="KW-0221">Differentiation</keyword>
<keyword id="KW-1015">Disulfide bond</keyword>
<keyword id="KW-0297">G-protein coupled receptor</keyword>
<keyword id="KW-0325">Glycoprotein</keyword>
<keyword id="KW-0358">Heparin-binding</keyword>
<keyword id="KW-0472">Membrane</keyword>
<keyword id="KW-0524">Neurogenesis</keyword>
<keyword id="KW-0675">Receptor</keyword>
<keyword id="KW-1185">Reference proteome</keyword>
<keyword id="KW-0964">Secreted</keyword>
<keyword id="KW-0732">Signal</keyword>
<keyword id="KW-0807">Transducer</keyword>
<keyword id="KW-0812">Transmembrane</keyword>
<keyword id="KW-1133">Transmembrane helix</keyword>
<keyword id="KW-0832">Ubl conjugation</keyword>
<gene>
    <name type="primary">ADGRG1</name>
    <name type="synonym">GPR56</name>
</gene>
<sequence length="687" mass="77019">MTAQSLLQTTLFLLSLLFLVQGAHGRGHREDFRFCSQRNQTHRSSLHYKPTPDLRISIENSEEALTVHAPFPAAHPASQSFPDPRGLYHFCLYWNRHAGRLHLLYGKRDFLLSDKASSLLCFQHQEESLAQGPPLLATSVTSWWSPQNISLPSAASFTFSFHSPPHTAAHNASVDMCELKRDLQLLSQFLKHPQKASRRPSAAPASQQLQSLESKLTSVRFMGDTVSFEEDRINATVWKLQPTAGLQDLHIHSRQEEEQSEILEYSVLLPRTLFQRTKGRRGEAEKRLLLVDFSSQALFQDKNSSQVLGEKVLGIVVQNTKVDNLTEPVVLTFQHQLQPKNVTLQCVFWVEDPTLSSPGHWSSAGCETVRRETQTSCLCNHLTYFAVLMVSSVEVDAVHKHYLSLLSYVGCVVSALACVVTIAAYLCSRRKPRDYTIKVHMNLLLAVFLLDTSFLLSEPVALTGSEAGCRASAIFLHFSLLACLSWMGLEGYNLYRLVVEVFGTYVPGYLLKLSAMGWGFPIFLVTLVALVDVDNYGPIILAVHRTPEGVIYPSMCWIRDSLVSYITNLGLFSLVFLFNMAMLATMVVQILRLRPHTQKWSHVLTLLGLSLVLGLPWALIFFSFASGTFQLVILYLFSIITSFQGFLIFIWYWSMRLQARGGPSPLKSNSDSARLPISSGSTSSSRI</sequence>